<name>RL17_ECO55</name>
<accession>B7LHZ6</accession>
<feature type="chain" id="PRO_1000184022" description="Large ribosomal subunit protein bL17">
    <location>
        <begin position="1"/>
        <end position="127"/>
    </location>
</feature>
<keyword id="KW-1185">Reference proteome</keyword>
<keyword id="KW-0687">Ribonucleoprotein</keyword>
<keyword id="KW-0689">Ribosomal protein</keyword>
<reference key="1">
    <citation type="journal article" date="2009" name="PLoS Genet.">
        <title>Organised genome dynamics in the Escherichia coli species results in highly diverse adaptive paths.</title>
        <authorList>
            <person name="Touchon M."/>
            <person name="Hoede C."/>
            <person name="Tenaillon O."/>
            <person name="Barbe V."/>
            <person name="Baeriswyl S."/>
            <person name="Bidet P."/>
            <person name="Bingen E."/>
            <person name="Bonacorsi S."/>
            <person name="Bouchier C."/>
            <person name="Bouvet O."/>
            <person name="Calteau A."/>
            <person name="Chiapello H."/>
            <person name="Clermont O."/>
            <person name="Cruveiller S."/>
            <person name="Danchin A."/>
            <person name="Diard M."/>
            <person name="Dossat C."/>
            <person name="Karoui M.E."/>
            <person name="Frapy E."/>
            <person name="Garry L."/>
            <person name="Ghigo J.M."/>
            <person name="Gilles A.M."/>
            <person name="Johnson J."/>
            <person name="Le Bouguenec C."/>
            <person name="Lescat M."/>
            <person name="Mangenot S."/>
            <person name="Martinez-Jehanne V."/>
            <person name="Matic I."/>
            <person name="Nassif X."/>
            <person name="Oztas S."/>
            <person name="Petit M.A."/>
            <person name="Pichon C."/>
            <person name="Rouy Z."/>
            <person name="Ruf C.S."/>
            <person name="Schneider D."/>
            <person name="Tourret J."/>
            <person name="Vacherie B."/>
            <person name="Vallenet D."/>
            <person name="Medigue C."/>
            <person name="Rocha E.P.C."/>
            <person name="Denamur E."/>
        </authorList>
    </citation>
    <scope>NUCLEOTIDE SEQUENCE [LARGE SCALE GENOMIC DNA]</scope>
    <source>
        <strain>55989 / EAEC</strain>
    </source>
</reference>
<dbReference type="EMBL" id="CU928145">
    <property type="protein sequence ID" value="CAU99994.1"/>
    <property type="molecule type" value="Genomic_DNA"/>
</dbReference>
<dbReference type="RefSeq" id="WP_001216368.1">
    <property type="nucleotide sequence ID" value="NZ_CP028304.1"/>
</dbReference>
<dbReference type="SMR" id="B7LHZ6"/>
<dbReference type="GeneID" id="97442834"/>
<dbReference type="KEGG" id="eck:EC55989_3711"/>
<dbReference type="HOGENOM" id="CLU_074407_2_0_6"/>
<dbReference type="Proteomes" id="UP000000746">
    <property type="component" value="Chromosome"/>
</dbReference>
<dbReference type="GO" id="GO:0022625">
    <property type="term" value="C:cytosolic large ribosomal subunit"/>
    <property type="evidence" value="ECO:0007669"/>
    <property type="project" value="TreeGrafter"/>
</dbReference>
<dbReference type="GO" id="GO:0003735">
    <property type="term" value="F:structural constituent of ribosome"/>
    <property type="evidence" value="ECO:0007669"/>
    <property type="project" value="InterPro"/>
</dbReference>
<dbReference type="GO" id="GO:0006412">
    <property type="term" value="P:translation"/>
    <property type="evidence" value="ECO:0007669"/>
    <property type="project" value="UniProtKB-UniRule"/>
</dbReference>
<dbReference type="FunFam" id="3.90.1030.10:FF:000001">
    <property type="entry name" value="50S ribosomal protein L17"/>
    <property type="match status" value="1"/>
</dbReference>
<dbReference type="Gene3D" id="3.90.1030.10">
    <property type="entry name" value="Ribosomal protein L17"/>
    <property type="match status" value="1"/>
</dbReference>
<dbReference type="HAMAP" id="MF_01368">
    <property type="entry name" value="Ribosomal_bL17"/>
    <property type="match status" value="1"/>
</dbReference>
<dbReference type="InterPro" id="IPR000456">
    <property type="entry name" value="Ribosomal_bL17"/>
</dbReference>
<dbReference type="InterPro" id="IPR047859">
    <property type="entry name" value="Ribosomal_bL17_CS"/>
</dbReference>
<dbReference type="InterPro" id="IPR036373">
    <property type="entry name" value="Ribosomal_bL17_sf"/>
</dbReference>
<dbReference type="NCBIfam" id="TIGR00059">
    <property type="entry name" value="L17"/>
    <property type="match status" value="1"/>
</dbReference>
<dbReference type="PANTHER" id="PTHR14413:SF16">
    <property type="entry name" value="LARGE RIBOSOMAL SUBUNIT PROTEIN BL17M"/>
    <property type="match status" value="1"/>
</dbReference>
<dbReference type="PANTHER" id="PTHR14413">
    <property type="entry name" value="RIBOSOMAL PROTEIN L17"/>
    <property type="match status" value="1"/>
</dbReference>
<dbReference type="Pfam" id="PF01196">
    <property type="entry name" value="Ribosomal_L17"/>
    <property type="match status" value="1"/>
</dbReference>
<dbReference type="SUPFAM" id="SSF64263">
    <property type="entry name" value="Prokaryotic ribosomal protein L17"/>
    <property type="match status" value="1"/>
</dbReference>
<dbReference type="PROSITE" id="PS01167">
    <property type="entry name" value="RIBOSOMAL_L17"/>
    <property type="match status" value="1"/>
</dbReference>
<sequence length="127" mass="14365">MRHRKSGRQLNRNSSHRQAMFRNMAGSLVRHEIIKTTLPKAKELRRVVEPLITLAKTDSVANRRLAFARTRDNEIVAKLFNELGPRFASRAGGYTRILKCGFRAGDNAPMAYIELVDRSEKAEAAAE</sequence>
<evidence type="ECO:0000255" key="1">
    <source>
        <dbReference type="HAMAP-Rule" id="MF_01368"/>
    </source>
</evidence>
<evidence type="ECO:0000305" key="2"/>
<proteinExistence type="inferred from homology"/>
<protein>
    <recommendedName>
        <fullName evidence="1">Large ribosomal subunit protein bL17</fullName>
    </recommendedName>
    <alternativeName>
        <fullName evidence="2">50S ribosomal protein L17</fullName>
    </alternativeName>
</protein>
<gene>
    <name evidence="1" type="primary">rplQ</name>
    <name type="ordered locus">EC55989_3711</name>
</gene>
<organism>
    <name type="scientific">Escherichia coli (strain 55989 / EAEC)</name>
    <dbReference type="NCBI Taxonomy" id="585055"/>
    <lineage>
        <taxon>Bacteria</taxon>
        <taxon>Pseudomonadati</taxon>
        <taxon>Pseudomonadota</taxon>
        <taxon>Gammaproteobacteria</taxon>
        <taxon>Enterobacterales</taxon>
        <taxon>Enterobacteriaceae</taxon>
        <taxon>Escherichia</taxon>
    </lineage>
</organism>
<comment type="subunit">
    <text evidence="1">Part of the 50S ribosomal subunit. Contacts protein L32.</text>
</comment>
<comment type="similarity">
    <text evidence="1">Belongs to the bacterial ribosomal protein bL17 family.</text>
</comment>